<name>HMUV_BORAV</name>
<proteinExistence type="evidence at protein level"/>
<accession>Q8L1U3</accession>
<gene>
    <name evidence="1" type="primary">hmuV</name>
    <name type="synonym">bhuV</name>
</gene>
<feature type="chain" id="PRO_0000269576" description="Hemin import ATP-binding protein HmuV">
    <location>
        <begin position="1"/>
        <end position="261"/>
    </location>
</feature>
<feature type="domain" description="ABC transporter" evidence="1">
    <location>
        <begin position="3"/>
        <end position="243"/>
    </location>
</feature>
<feature type="binding site" evidence="1">
    <location>
        <begin position="35"/>
        <end position="42"/>
    </location>
    <ligand>
        <name>ATP</name>
        <dbReference type="ChEBI" id="CHEBI:30616"/>
    </ligand>
</feature>
<comment type="function">
    <text evidence="2">Part of the ABC transporter complex HmuTUV involved in hemin import. Responsible for energy coupling to the transport system (Probable).</text>
</comment>
<comment type="subunit">
    <text evidence="1">The complex is composed of two ATP-binding proteins (HmuV), two transmembrane proteins (HmuU) and a solute-binding protein (HmuT).</text>
</comment>
<comment type="subcellular location">
    <subcellularLocation>
        <location evidence="1">Cell inner membrane</location>
        <topology evidence="1">Peripheral membrane protein</topology>
    </subcellularLocation>
</comment>
<comment type="similarity">
    <text evidence="1">Belongs to the ABC transporter superfamily. Heme (hemin) importer (TC 3.A.1.14.5) family.</text>
</comment>
<keyword id="KW-0067">ATP-binding</keyword>
<keyword id="KW-0997">Cell inner membrane</keyword>
<keyword id="KW-1003">Cell membrane</keyword>
<keyword id="KW-0472">Membrane</keyword>
<keyword id="KW-0547">Nucleotide-binding</keyword>
<keyword id="KW-1278">Translocase</keyword>
<keyword id="KW-0813">Transport</keyword>
<sequence length="261" mass="28023">MTLQAQDLSVDRGAKRILTQVSLTLEPGRMLGLLGANGAGKSTLLACLSGELEPVCGHIEINGKPLRSLASAKQARLRAVLPQKPSLSFDLGVREVVGMGAYPYAELSPADVDALCEKALRQAGVSHLAGRRYLELSGGEQQRVQFARVLMQCQAAPAGQPRYLMLDEPISNLDPRHQIDVLRTAHDLAREAGVGVLVIVHDVNLSARWCDRLLLLAQGSVVADGAPAEVLTPANLRRVYGVEADVLPHPREAGTLLVLMR</sequence>
<dbReference type="EC" id="7.6.2.-" evidence="1"/>
<dbReference type="EMBL" id="AY095952">
    <property type="protein sequence ID" value="AAM28272.1"/>
    <property type="molecule type" value="Genomic_DNA"/>
</dbReference>
<dbReference type="RefSeq" id="WP_012418768.1">
    <property type="nucleotide sequence ID" value="NZ_UFTG01000001.1"/>
</dbReference>
<dbReference type="SMR" id="Q8L1U3"/>
<dbReference type="OMA" id="HQHNTLR"/>
<dbReference type="GO" id="GO:0005886">
    <property type="term" value="C:plasma membrane"/>
    <property type="evidence" value="ECO:0007669"/>
    <property type="project" value="UniProtKB-SubCell"/>
</dbReference>
<dbReference type="GO" id="GO:0005524">
    <property type="term" value="F:ATP binding"/>
    <property type="evidence" value="ECO:0007669"/>
    <property type="project" value="UniProtKB-KW"/>
</dbReference>
<dbReference type="GO" id="GO:0016887">
    <property type="term" value="F:ATP hydrolysis activity"/>
    <property type="evidence" value="ECO:0007669"/>
    <property type="project" value="InterPro"/>
</dbReference>
<dbReference type="CDD" id="cd03214">
    <property type="entry name" value="ABC_Iron-Siderophores_B12_Hemin"/>
    <property type="match status" value="1"/>
</dbReference>
<dbReference type="Gene3D" id="3.40.50.300">
    <property type="entry name" value="P-loop containing nucleotide triphosphate hydrolases"/>
    <property type="match status" value="1"/>
</dbReference>
<dbReference type="InterPro" id="IPR003593">
    <property type="entry name" value="AAA+_ATPase"/>
</dbReference>
<dbReference type="InterPro" id="IPR003439">
    <property type="entry name" value="ABC_transporter-like_ATP-bd"/>
</dbReference>
<dbReference type="InterPro" id="IPR017871">
    <property type="entry name" value="ABC_transporter-like_CS"/>
</dbReference>
<dbReference type="InterPro" id="IPR027417">
    <property type="entry name" value="P-loop_NTPase"/>
</dbReference>
<dbReference type="NCBIfam" id="NF010068">
    <property type="entry name" value="PRK13548.1"/>
    <property type="match status" value="1"/>
</dbReference>
<dbReference type="PANTHER" id="PTHR42794">
    <property type="entry name" value="HEMIN IMPORT ATP-BINDING PROTEIN HMUV"/>
    <property type="match status" value="1"/>
</dbReference>
<dbReference type="PANTHER" id="PTHR42794:SF1">
    <property type="entry name" value="HEMIN IMPORT ATP-BINDING PROTEIN HMUV"/>
    <property type="match status" value="1"/>
</dbReference>
<dbReference type="Pfam" id="PF00005">
    <property type="entry name" value="ABC_tran"/>
    <property type="match status" value="1"/>
</dbReference>
<dbReference type="SMART" id="SM00382">
    <property type="entry name" value="AAA"/>
    <property type="match status" value="1"/>
</dbReference>
<dbReference type="SUPFAM" id="SSF52540">
    <property type="entry name" value="P-loop containing nucleoside triphosphate hydrolases"/>
    <property type="match status" value="1"/>
</dbReference>
<dbReference type="PROSITE" id="PS00211">
    <property type="entry name" value="ABC_TRANSPORTER_1"/>
    <property type="match status" value="1"/>
</dbReference>
<dbReference type="PROSITE" id="PS50893">
    <property type="entry name" value="ABC_TRANSPORTER_2"/>
    <property type="match status" value="1"/>
</dbReference>
<dbReference type="PROSITE" id="PS51261">
    <property type="entry name" value="HMUV"/>
    <property type="match status" value="1"/>
</dbReference>
<evidence type="ECO:0000255" key="1">
    <source>
        <dbReference type="HAMAP-Rule" id="MF_01718"/>
    </source>
</evidence>
<evidence type="ECO:0000305" key="2">
    <source>
    </source>
</evidence>
<organism>
    <name type="scientific">Bordetella avium</name>
    <dbReference type="NCBI Taxonomy" id="521"/>
    <lineage>
        <taxon>Bacteria</taxon>
        <taxon>Pseudomonadati</taxon>
        <taxon>Pseudomonadota</taxon>
        <taxon>Betaproteobacteria</taxon>
        <taxon>Burkholderiales</taxon>
        <taxon>Alcaligenaceae</taxon>
        <taxon>Bordetella</taxon>
    </lineage>
</organism>
<reference key="1">
    <citation type="journal article" date="2002" name="Infect. Immun.">
        <title>BhuR, a virulence-associated outer membrane protein of Bordetella avium, is required for the acquisition of iron from heme and hemoproteins.</title>
        <authorList>
            <person name="Murphy E.R."/>
            <person name="Sacco R.E."/>
            <person name="Dickenson A."/>
            <person name="Metzger D.J."/>
            <person name="Hu Y."/>
            <person name="Orndorff P.E."/>
            <person name="Connell T.D."/>
        </authorList>
    </citation>
    <scope>NUCLEOTIDE SEQUENCE [GENOMIC DNA]</scope>
    <scope>FUNCTION IN HEMIN TRANSPORT</scope>
    <source>
        <strain>4169</strain>
    </source>
</reference>
<protein>
    <recommendedName>
        <fullName evidence="1">Hemin import ATP-binding protein HmuV</fullName>
        <ecNumber evidence="1">7.6.2.-</ecNumber>
    </recommendedName>
</protein>